<comment type="function">
    <text evidence="2">Protein transport. Probably involved in vesicular traffic.</text>
</comment>
<comment type="subcellular location">
    <subcellularLocation>
        <location evidence="2">Endoplasmic reticulum membrane</location>
        <topology evidence="2">Lipid-anchor</topology>
    </subcellularLocation>
    <subcellularLocation>
        <location evidence="2">Golgi apparatus membrane</location>
        <topology evidence="2">Lipid-anchor</topology>
    </subcellularLocation>
</comment>
<comment type="similarity">
    <text evidence="4">Belongs to the small GTPase superfamily. Rab family.</text>
</comment>
<dbReference type="EMBL" id="U22433">
    <property type="protein sequence ID" value="AAA63902.1"/>
    <property type="molecule type" value="mRNA"/>
</dbReference>
<dbReference type="EMBL" id="CM000786">
    <property type="protein sequence ID" value="AQK44197.1"/>
    <property type="molecule type" value="Genomic_DNA"/>
</dbReference>
<dbReference type="EMBL" id="CM000786">
    <property type="protein sequence ID" value="AQK44198.1"/>
    <property type="molecule type" value="Genomic_DNA"/>
</dbReference>
<dbReference type="EMBL" id="EU971297">
    <property type="protein sequence ID" value="ACG43415.1"/>
    <property type="molecule type" value="mRNA"/>
</dbReference>
<dbReference type="EMBL" id="BT068076">
    <property type="protein sequence ID" value="ACN34973.1"/>
    <property type="molecule type" value="mRNA"/>
</dbReference>
<dbReference type="PIR" id="T02248">
    <property type="entry name" value="T02248"/>
</dbReference>
<dbReference type="RefSeq" id="NP_001106234.1">
    <property type="nucleotide sequence ID" value="NM_001112763.2"/>
</dbReference>
<dbReference type="SMR" id="P49104"/>
<dbReference type="FunCoup" id="P49104">
    <property type="interactions" value="2844"/>
</dbReference>
<dbReference type="STRING" id="4577.P49104"/>
<dbReference type="PaxDb" id="4577-GRMZM2G173878_P01"/>
<dbReference type="GeneID" id="100127494"/>
<dbReference type="KEGG" id="zma:100127494"/>
<dbReference type="MaizeGDB" id="121973"/>
<dbReference type="eggNOG" id="KOG0098">
    <property type="taxonomic scope" value="Eukaryota"/>
</dbReference>
<dbReference type="HOGENOM" id="CLU_041217_23_1_1"/>
<dbReference type="InParanoid" id="P49104"/>
<dbReference type="OMA" id="TNATHAC"/>
<dbReference type="OrthoDB" id="9989112at2759"/>
<dbReference type="Proteomes" id="UP000007305">
    <property type="component" value="Unplaced"/>
</dbReference>
<dbReference type="ExpressionAtlas" id="P49104">
    <property type="expression patterns" value="baseline and differential"/>
</dbReference>
<dbReference type="GO" id="GO:0005789">
    <property type="term" value="C:endoplasmic reticulum membrane"/>
    <property type="evidence" value="ECO:0007669"/>
    <property type="project" value="UniProtKB-SubCell"/>
</dbReference>
<dbReference type="GO" id="GO:0005794">
    <property type="term" value="C:Golgi apparatus"/>
    <property type="evidence" value="ECO:0000318"/>
    <property type="project" value="GO_Central"/>
</dbReference>
<dbReference type="GO" id="GO:0000139">
    <property type="term" value="C:Golgi membrane"/>
    <property type="evidence" value="ECO:0007669"/>
    <property type="project" value="UniProtKB-SubCell"/>
</dbReference>
<dbReference type="GO" id="GO:0005525">
    <property type="term" value="F:GTP binding"/>
    <property type="evidence" value="ECO:0000318"/>
    <property type="project" value="GO_Central"/>
</dbReference>
<dbReference type="GO" id="GO:0003924">
    <property type="term" value="F:GTPase activity"/>
    <property type="evidence" value="ECO:0000318"/>
    <property type="project" value="GO_Central"/>
</dbReference>
<dbReference type="GO" id="GO:0015031">
    <property type="term" value="P:protein transport"/>
    <property type="evidence" value="ECO:0007669"/>
    <property type="project" value="UniProtKB-KW"/>
</dbReference>
<dbReference type="GO" id="GO:0016192">
    <property type="term" value="P:vesicle-mediated transport"/>
    <property type="evidence" value="ECO:0000318"/>
    <property type="project" value="GO_Central"/>
</dbReference>
<dbReference type="CDD" id="cd01866">
    <property type="entry name" value="Rab2"/>
    <property type="match status" value="1"/>
</dbReference>
<dbReference type="FunFam" id="3.40.50.300:FF:000263">
    <property type="entry name" value="Ras-related protein RABB1c"/>
    <property type="match status" value="1"/>
</dbReference>
<dbReference type="Gene3D" id="3.40.50.300">
    <property type="entry name" value="P-loop containing nucleotide triphosphate hydrolases"/>
    <property type="match status" value="1"/>
</dbReference>
<dbReference type="InterPro" id="IPR027417">
    <property type="entry name" value="P-loop_NTPase"/>
</dbReference>
<dbReference type="InterPro" id="IPR050209">
    <property type="entry name" value="Rab_GTPases_membrane_traffic"/>
</dbReference>
<dbReference type="InterPro" id="IPR005225">
    <property type="entry name" value="Small_GTP-bd"/>
</dbReference>
<dbReference type="InterPro" id="IPR001806">
    <property type="entry name" value="Small_GTPase"/>
</dbReference>
<dbReference type="NCBIfam" id="TIGR00231">
    <property type="entry name" value="small_GTP"/>
    <property type="match status" value="1"/>
</dbReference>
<dbReference type="PANTHER" id="PTHR47979">
    <property type="entry name" value="DRAB11-RELATED"/>
    <property type="match status" value="1"/>
</dbReference>
<dbReference type="Pfam" id="PF00071">
    <property type="entry name" value="Ras"/>
    <property type="match status" value="1"/>
</dbReference>
<dbReference type="PRINTS" id="PR00449">
    <property type="entry name" value="RASTRNSFRMNG"/>
</dbReference>
<dbReference type="SMART" id="SM00175">
    <property type="entry name" value="RAB"/>
    <property type="match status" value="1"/>
</dbReference>
<dbReference type="SMART" id="SM00176">
    <property type="entry name" value="RAN"/>
    <property type="match status" value="1"/>
</dbReference>
<dbReference type="SMART" id="SM00173">
    <property type="entry name" value="RAS"/>
    <property type="match status" value="1"/>
</dbReference>
<dbReference type="SMART" id="SM00174">
    <property type="entry name" value="RHO"/>
    <property type="match status" value="1"/>
</dbReference>
<dbReference type="SUPFAM" id="SSF52540">
    <property type="entry name" value="P-loop containing nucleoside triphosphate hydrolases"/>
    <property type="match status" value="1"/>
</dbReference>
<dbReference type="PROSITE" id="PS51419">
    <property type="entry name" value="RAB"/>
    <property type="match status" value="1"/>
</dbReference>
<protein>
    <recommendedName>
        <fullName>Ras-related protein Rab-2-B</fullName>
    </recommendedName>
</protein>
<proteinExistence type="evidence at transcript level"/>
<name>RAB2B_MAIZE</name>
<accession>P49104</accession>
<accession>B6U232</accession>
<reference key="1">
    <citation type="submission" date="1995-03" db="EMBL/GenBank/DDBJ databases">
        <authorList>
            <person name="Laughner B.J."/>
            <person name="Ferl R.J."/>
            <person name="Almira E.C."/>
        </authorList>
    </citation>
    <scope>NUCLEOTIDE SEQUENCE [MRNA]</scope>
</reference>
<reference key="2">
    <citation type="journal article" date="2009" name="Science">
        <title>The B73 maize genome: complexity, diversity, and dynamics.</title>
        <authorList>
            <person name="Schnable P.S."/>
            <person name="Ware D."/>
            <person name="Fulton R.S."/>
            <person name="Stein J.C."/>
            <person name="Wei F."/>
            <person name="Pasternak S."/>
            <person name="Liang C."/>
            <person name="Zhang J."/>
            <person name="Fulton L."/>
            <person name="Graves T.A."/>
            <person name="Minx P."/>
            <person name="Reily A.D."/>
            <person name="Courtney L."/>
            <person name="Kruchowski S.S."/>
            <person name="Tomlinson C."/>
            <person name="Strong C."/>
            <person name="Delehaunty K."/>
            <person name="Fronick C."/>
            <person name="Courtney B."/>
            <person name="Rock S.M."/>
            <person name="Belter E."/>
            <person name="Du F."/>
            <person name="Kim K."/>
            <person name="Abbott R.M."/>
            <person name="Cotton M."/>
            <person name="Levy A."/>
            <person name="Marchetto P."/>
            <person name="Ochoa K."/>
            <person name="Jackson S.M."/>
            <person name="Gillam B."/>
            <person name="Chen W."/>
            <person name="Yan L."/>
            <person name="Higginbotham J."/>
            <person name="Cardenas M."/>
            <person name="Waligorski J."/>
            <person name="Applebaum E."/>
            <person name="Phelps L."/>
            <person name="Falcone J."/>
            <person name="Kanchi K."/>
            <person name="Thane T."/>
            <person name="Scimone A."/>
            <person name="Thane N."/>
            <person name="Henke J."/>
            <person name="Wang T."/>
            <person name="Ruppert J."/>
            <person name="Shah N."/>
            <person name="Rotter K."/>
            <person name="Hodges J."/>
            <person name="Ingenthron E."/>
            <person name="Cordes M."/>
            <person name="Kohlberg S."/>
            <person name="Sgro J."/>
            <person name="Delgado B."/>
            <person name="Mead K."/>
            <person name="Chinwalla A."/>
            <person name="Leonard S."/>
            <person name="Crouse K."/>
            <person name="Collura K."/>
            <person name="Kudrna D."/>
            <person name="Currie J."/>
            <person name="He R."/>
            <person name="Angelova A."/>
            <person name="Rajasekar S."/>
            <person name="Mueller T."/>
            <person name="Lomeli R."/>
            <person name="Scara G."/>
            <person name="Ko A."/>
            <person name="Delaney K."/>
            <person name="Wissotski M."/>
            <person name="Lopez G."/>
            <person name="Campos D."/>
            <person name="Braidotti M."/>
            <person name="Ashley E."/>
            <person name="Golser W."/>
            <person name="Kim H."/>
            <person name="Lee S."/>
            <person name="Lin J."/>
            <person name="Dujmic Z."/>
            <person name="Kim W."/>
            <person name="Talag J."/>
            <person name="Zuccolo A."/>
            <person name="Fan C."/>
            <person name="Sebastian A."/>
            <person name="Kramer M."/>
            <person name="Spiegel L."/>
            <person name="Nascimento L."/>
            <person name="Zutavern T."/>
            <person name="Miller B."/>
            <person name="Ambroise C."/>
            <person name="Muller S."/>
            <person name="Spooner W."/>
            <person name="Narechania A."/>
            <person name="Ren L."/>
            <person name="Wei S."/>
            <person name="Kumari S."/>
            <person name="Faga B."/>
            <person name="Levy M.J."/>
            <person name="McMahan L."/>
            <person name="Van Buren P."/>
            <person name="Vaughn M.W."/>
            <person name="Ying K."/>
            <person name="Yeh C.-T."/>
            <person name="Emrich S.J."/>
            <person name="Jia Y."/>
            <person name="Kalyanaraman A."/>
            <person name="Hsia A.-P."/>
            <person name="Barbazuk W.B."/>
            <person name="Baucom R.S."/>
            <person name="Brutnell T.P."/>
            <person name="Carpita N.C."/>
            <person name="Chaparro C."/>
            <person name="Chia J.-M."/>
            <person name="Deragon J.-M."/>
            <person name="Estill J.C."/>
            <person name="Fu Y."/>
            <person name="Jeddeloh J.A."/>
            <person name="Han Y."/>
            <person name="Lee H."/>
            <person name="Li P."/>
            <person name="Lisch D.R."/>
            <person name="Liu S."/>
            <person name="Liu Z."/>
            <person name="Nagel D.H."/>
            <person name="McCann M.C."/>
            <person name="SanMiguel P."/>
            <person name="Myers A.M."/>
            <person name="Nettleton D."/>
            <person name="Nguyen J."/>
            <person name="Penning B.W."/>
            <person name="Ponnala L."/>
            <person name="Schneider K.L."/>
            <person name="Schwartz D.C."/>
            <person name="Sharma A."/>
            <person name="Soderlund C."/>
            <person name="Springer N.M."/>
            <person name="Sun Q."/>
            <person name="Wang H."/>
            <person name="Waterman M."/>
            <person name="Westerman R."/>
            <person name="Wolfgruber T.K."/>
            <person name="Yang L."/>
            <person name="Yu Y."/>
            <person name="Zhang L."/>
            <person name="Zhou S."/>
            <person name="Zhu Q."/>
            <person name="Bennetzen J.L."/>
            <person name="Dawe R.K."/>
            <person name="Jiang J."/>
            <person name="Jiang N."/>
            <person name="Presting G.G."/>
            <person name="Wessler S.R."/>
            <person name="Aluru S."/>
            <person name="Martienssen R.A."/>
            <person name="Clifton S.W."/>
            <person name="McCombie W.R."/>
            <person name="Wing R.A."/>
            <person name="Wilson R.K."/>
        </authorList>
    </citation>
    <scope>NUCLEOTIDE SEQUENCE [LARGE SCALE GENOMIC DNA]</scope>
    <source>
        <strain>cv. B73</strain>
    </source>
</reference>
<reference key="3">
    <citation type="journal article" date="2009" name="Plant Mol. Biol.">
        <title>Insights into corn genes derived from large-scale cDNA sequencing.</title>
        <authorList>
            <person name="Alexandrov N.N."/>
            <person name="Brover V.V."/>
            <person name="Freidin S."/>
            <person name="Troukhan M.E."/>
            <person name="Tatarinova T.V."/>
            <person name="Zhang H."/>
            <person name="Swaller T.J."/>
            <person name="Lu Y.-P."/>
            <person name="Bouck J."/>
            <person name="Flavell R.B."/>
            <person name="Feldmann K.A."/>
        </authorList>
    </citation>
    <scope>NUCLEOTIDE SEQUENCE [LARGE SCALE MRNA]</scope>
</reference>
<reference key="4">
    <citation type="journal article" date="2009" name="PLoS Genet.">
        <title>Sequencing, mapping, and analysis of 27,455 maize full-length cDNAs.</title>
        <authorList>
            <person name="Soderlund C."/>
            <person name="Descour A."/>
            <person name="Kudrna D."/>
            <person name="Bomhoff M."/>
            <person name="Boyd L."/>
            <person name="Currie J."/>
            <person name="Angelova A."/>
            <person name="Collura K."/>
            <person name="Wissotski M."/>
            <person name="Ashley E."/>
            <person name="Morrow D."/>
            <person name="Fernandes J."/>
            <person name="Walbot V."/>
            <person name="Yu Y."/>
        </authorList>
    </citation>
    <scope>NUCLEOTIDE SEQUENCE [LARGE SCALE MRNA]</scope>
    <source>
        <strain>cv. B73</strain>
    </source>
</reference>
<organism>
    <name type="scientific">Zea mays</name>
    <name type="common">Maize</name>
    <dbReference type="NCBI Taxonomy" id="4577"/>
    <lineage>
        <taxon>Eukaryota</taxon>
        <taxon>Viridiplantae</taxon>
        <taxon>Streptophyta</taxon>
        <taxon>Embryophyta</taxon>
        <taxon>Tracheophyta</taxon>
        <taxon>Spermatophyta</taxon>
        <taxon>Magnoliopsida</taxon>
        <taxon>Liliopsida</taxon>
        <taxon>Poales</taxon>
        <taxon>Poaceae</taxon>
        <taxon>PACMAD clade</taxon>
        <taxon>Panicoideae</taxon>
        <taxon>Andropogonodae</taxon>
        <taxon>Andropogoneae</taxon>
        <taxon>Tripsacinae</taxon>
        <taxon>Zea</taxon>
    </lineage>
</organism>
<keyword id="KW-0256">Endoplasmic reticulum</keyword>
<keyword id="KW-0333">Golgi apparatus</keyword>
<keyword id="KW-0342">GTP-binding</keyword>
<keyword id="KW-0449">Lipoprotein</keyword>
<keyword id="KW-0472">Membrane</keyword>
<keyword id="KW-0547">Nucleotide-binding</keyword>
<keyword id="KW-0636">Prenylation</keyword>
<keyword id="KW-0653">Protein transport</keyword>
<keyword id="KW-1185">Reference proteome</keyword>
<keyword id="KW-0813">Transport</keyword>
<gene>
    <name type="primary">RAB2B</name>
</gene>
<sequence length="210" mass="23061">MSYAYLFKYIIIGDTGVGKSCLLLQFTDKRFQPVHDLTIGVEFGARMITIDNKPIKLQIWDTAGQESFRSITRSYYRGAAGALLVYDITRRETFNHLASWLEDARQHANANMTIMLVGNKCDLSHRRAVSYEEGEQFAKEHGLIFMEASAKTAQNVEEAFVKTAGAIYKKIQDGVFDVSNESYGIKVGYAIPGQSGGAGSSSSQGGGCCS</sequence>
<feature type="chain" id="PRO_0000121074" description="Ras-related protein Rab-2-B">
    <location>
        <begin position="1"/>
        <end position="210"/>
    </location>
</feature>
<feature type="short sequence motif" description="Effector region" evidence="1">
    <location>
        <begin position="35"/>
        <end position="43"/>
    </location>
</feature>
<feature type="binding site" evidence="2">
    <location>
        <begin position="13"/>
        <end position="21"/>
    </location>
    <ligand>
        <name>GTP</name>
        <dbReference type="ChEBI" id="CHEBI:37565"/>
    </ligand>
</feature>
<feature type="binding site" evidence="3">
    <location>
        <begin position="61"/>
        <end position="65"/>
    </location>
    <ligand>
        <name>GTP</name>
        <dbReference type="ChEBI" id="CHEBI:37565"/>
    </ligand>
</feature>
<feature type="binding site" evidence="2">
    <location>
        <begin position="119"/>
        <end position="122"/>
    </location>
    <ligand>
        <name>GTP</name>
        <dbReference type="ChEBI" id="CHEBI:37565"/>
    </ligand>
</feature>
<feature type="binding site" evidence="2">
    <location>
        <begin position="149"/>
        <end position="151"/>
    </location>
    <ligand>
        <name>GTP</name>
        <dbReference type="ChEBI" id="CHEBI:37565"/>
    </ligand>
</feature>
<feature type="lipid moiety-binding region" description="S-geranylgeranyl cysteine" evidence="1">
    <location>
        <position position="208"/>
    </location>
</feature>
<feature type="lipid moiety-binding region" description="S-geranylgeranyl cysteine" evidence="1">
    <location>
        <position position="209"/>
    </location>
</feature>
<evidence type="ECO:0000250" key="1"/>
<evidence type="ECO:0000250" key="2">
    <source>
        <dbReference type="UniProtKB" id="P61019"/>
    </source>
</evidence>
<evidence type="ECO:0000250" key="3">
    <source>
        <dbReference type="UniProtKB" id="P62820"/>
    </source>
</evidence>
<evidence type="ECO:0000305" key="4"/>